<evidence type="ECO:0000250" key="1">
    <source>
        <dbReference type="UniProtKB" id="Q49I55"/>
    </source>
</evidence>
<evidence type="ECO:0000255" key="2">
    <source>
        <dbReference type="PROSITE-ProRule" id="PRU00470"/>
    </source>
</evidence>
<evidence type="ECO:0000256" key="3">
    <source>
        <dbReference type="SAM" id="MobiDB-lite"/>
    </source>
</evidence>
<evidence type="ECO:0000303" key="4">
    <source>
    </source>
</evidence>
<evidence type="ECO:0000305" key="5"/>
<evidence type="ECO:0000312" key="6">
    <source>
        <dbReference type="EMBL" id="AFW61574.1"/>
    </source>
</evidence>
<proteinExistence type="inferred from homology"/>
<keyword id="KW-0479">Metal-binding</keyword>
<keyword id="KW-1185">Reference proteome</keyword>
<keyword id="KW-0862">Zinc</keyword>
<keyword id="KW-0863">Zinc-finger</keyword>
<sequence length="432" mass="45168">MDWDLNAAGAWDLAELERDHAAAAPSSGGHAANAAAAGTGTESRPPAPGAAGAPAECSVDLKLGGMGECEPGAARREREAAAGAAKRPRPAGPGGQQQQQQCPSCAVDGCRADLGKCRDYHRRHKVCEAHSKTPVVVVAGREMRFCQQCSRFHLLAEFDADKRSCRKRLDGHNRRRRKPQPDTMASASFIASQQGTRFSPFAHPRLEASWPPGVMKTEESPYHITHQIPLGSSSSSRQQHFVALGAATPAYAKEGRRFPFLQEGEISFATGVVLEPPAAAPACQPLLRTGAPSESSGAGGSKMFSDQGLARVLDSDCALSLLSAPANSSGIDVSRMVRPTEHVPMAQQPVVPGLQFGSASWFPRPQASTGGSFVPSCPAAVEGEQQLNAVLGPNDSEVSMNYGGMFHVGGGSGGGEGSSDGGTSSSMPFSWQ</sequence>
<accession>Q49I57</accession>
<accession>G5D585</accession>
<organism>
    <name type="scientific">Zea mays</name>
    <name type="common">Maize</name>
    <dbReference type="NCBI Taxonomy" id="4577"/>
    <lineage>
        <taxon>Eukaryota</taxon>
        <taxon>Viridiplantae</taxon>
        <taxon>Streptophyta</taxon>
        <taxon>Embryophyta</taxon>
        <taxon>Tracheophyta</taxon>
        <taxon>Spermatophyta</taxon>
        <taxon>Magnoliopsida</taxon>
        <taxon>Liliopsida</taxon>
        <taxon>Poales</taxon>
        <taxon>Poaceae</taxon>
        <taxon>PACMAD clade</taxon>
        <taxon>Panicoideae</taxon>
        <taxon>Andropogonodae</taxon>
        <taxon>Andropogoneae</taxon>
        <taxon>Tripsacinae</taxon>
        <taxon>Zea</taxon>
    </lineage>
</organism>
<dbReference type="EMBL" id="AY883559">
    <property type="protein sequence ID" value="AAX83872.1"/>
    <property type="molecule type" value="Genomic_DNA"/>
</dbReference>
<dbReference type="EMBL" id="CM000780">
    <property type="protein sequence ID" value="AFW61574.1"/>
    <property type="molecule type" value="Genomic_DNA"/>
</dbReference>
<dbReference type="EMBL" id="JN560749">
    <property type="protein sequence ID" value="AEP96351.1"/>
    <property type="molecule type" value="Genomic_DNA"/>
</dbReference>
<dbReference type="RefSeq" id="XP_008678396.1">
    <property type="nucleotide sequence ID" value="XM_008680174.1"/>
</dbReference>
<dbReference type="SMR" id="Q49I57"/>
<dbReference type="STRING" id="4577.Q49I57"/>
<dbReference type="PaxDb" id="4577-GRMZM2G101511_P02"/>
<dbReference type="EnsemblPlants" id="Zm00001eb175150_T003">
    <property type="protein sequence ID" value="Zm00001eb175150_P003"/>
    <property type="gene ID" value="Zm00001eb175150"/>
</dbReference>
<dbReference type="Gramene" id="Zm00001eb175150_T003">
    <property type="protein sequence ID" value="Zm00001eb175150_P003"/>
    <property type="gene ID" value="Zm00001eb175150"/>
</dbReference>
<dbReference type="eggNOG" id="ENOG502QRGA">
    <property type="taxonomic scope" value="Eukaryota"/>
</dbReference>
<dbReference type="HOGENOM" id="CLU_042475_0_0_1"/>
<dbReference type="InParanoid" id="Q49I57"/>
<dbReference type="OMA" id="PEQNWQG"/>
<dbReference type="OrthoDB" id="514967at2759"/>
<dbReference type="Proteomes" id="UP000007305">
    <property type="component" value="Chromosome 4"/>
</dbReference>
<dbReference type="ExpressionAtlas" id="Q49I57">
    <property type="expression patterns" value="baseline"/>
</dbReference>
<dbReference type="GO" id="GO:0005634">
    <property type="term" value="C:nucleus"/>
    <property type="evidence" value="ECO:0007669"/>
    <property type="project" value="InterPro"/>
</dbReference>
<dbReference type="GO" id="GO:0003677">
    <property type="term" value="F:DNA binding"/>
    <property type="evidence" value="ECO:0007669"/>
    <property type="project" value="InterPro"/>
</dbReference>
<dbReference type="GO" id="GO:0008270">
    <property type="term" value="F:zinc ion binding"/>
    <property type="evidence" value="ECO:0007669"/>
    <property type="project" value="UniProtKB-KW"/>
</dbReference>
<dbReference type="Gene3D" id="4.10.1100.10">
    <property type="entry name" value="Transcription factor, SBP-box domain"/>
    <property type="match status" value="1"/>
</dbReference>
<dbReference type="InterPro" id="IPR044817">
    <property type="entry name" value="SBP-like"/>
</dbReference>
<dbReference type="InterPro" id="IPR004333">
    <property type="entry name" value="SBP_dom"/>
</dbReference>
<dbReference type="InterPro" id="IPR036893">
    <property type="entry name" value="SBP_sf"/>
</dbReference>
<dbReference type="PANTHER" id="PTHR31251:SF33">
    <property type="entry name" value="SQUAMOSA PROMOTER-BINDING-LIKE PROTEIN 16"/>
    <property type="match status" value="1"/>
</dbReference>
<dbReference type="PANTHER" id="PTHR31251">
    <property type="entry name" value="SQUAMOSA PROMOTER-BINDING-LIKE PROTEIN 4"/>
    <property type="match status" value="1"/>
</dbReference>
<dbReference type="Pfam" id="PF03110">
    <property type="entry name" value="SBP"/>
    <property type="match status" value="1"/>
</dbReference>
<dbReference type="SUPFAM" id="SSF103612">
    <property type="entry name" value="SBT domain"/>
    <property type="match status" value="1"/>
</dbReference>
<dbReference type="PROSITE" id="PS51141">
    <property type="entry name" value="ZF_SBP"/>
    <property type="match status" value="1"/>
</dbReference>
<feature type="chain" id="PRO_0000434102" description="Teosinte glume architecture 1">
    <location>
        <begin position="1"/>
        <end position="432"/>
    </location>
</feature>
<feature type="zinc finger region" description="SBP-type" evidence="2">
    <location>
        <begin position="102"/>
        <end position="179"/>
    </location>
</feature>
<feature type="region of interest" description="Disordered" evidence="3">
    <location>
        <begin position="20"/>
        <end position="55"/>
    </location>
</feature>
<feature type="region of interest" description="Disordered" evidence="3">
    <location>
        <begin position="68"/>
        <end position="102"/>
    </location>
</feature>
<feature type="region of interest" description="Disordered" evidence="3">
    <location>
        <begin position="409"/>
        <end position="432"/>
    </location>
</feature>
<feature type="compositionally biased region" description="Low complexity" evidence="3">
    <location>
        <begin position="22"/>
        <end position="41"/>
    </location>
</feature>
<feature type="compositionally biased region" description="Gly residues" evidence="3">
    <location>
        <begin position="409"/>
        <end position="420"/>
    </location>
</feature>
<feature type="binding site" evidence="2">
    <location>
        <position position="105"/>
    </location>
    <ligand>
        <name>Zn(2+)</name>
        <dbReference type="ChEBI" id="CHEBI:29105"/>
        <label>1</label>
    </ligand>
</feature>
<feature type="binding site" evidence="2">
    <location>
        <position position="110"/>
    </location>
    <ligand>
        <name>Zn(2+)</name>
        <dbReference type="ChEBI" id="CHEBI:29105"/>
        <label>1</label>
    </ligand>
</feature>
<feature type="binding site" evidence="2">
    <location>
        <position position="127"/>
    </location>
    <ligand>
        <name>Zn(2+)</name>
        <dbReference type="ChEBI" id="CHEBI:29105"/>
        <label>1</label>
    </ligand>
</feature>
<feature type="binding site" evidence="2">
    <location>
        <position position="130"/>
    </location>
    <ligand>
        <name>Zn(2+)</name>
        <dbReference type="ChEBI" id="CHEBI:29105"/>
        <label>1</label>
    </ligand>
</feature>
<feature type="binding site" evidence="2">
    <location>
        <position position="146"/>
    </location>
    <ligand>
        <name>Zn(2+)</name>
        <dbReference type="ChEBI" id="CHEBI:29105"/>
        <label>2</label>
    </ligand>
</feature>
<feature type="binding site" evidence="2">
    <location>
        <position position="149"/>
    </location>
    <ligand>
        <name>Zn(2+)</name>
        <dbReference type="ChEBI" id="CHEBI:29105"/>
        <label>2</label>
    </ligand>
</feature>
<feature type="binding site" evidence="2">
    <location>
        <position position="153"/>
    </location>
    <ligand>
        <name>Zn(2+)</name>
        <dbReference type="ChEBI" id="CHEBI:29105"/>
        <label>2</label>
    </ligand>
</feature>
<feature type="binding site" evidence="2">
    <location>
        <position position="165"/>
    </location>
    <ligand>
        <name>Zn(2+)</name>
        <dbReference type="ChEBI" id="CHEBI:29105"/>
        <label>2</label>
    </ligand>
</feature>
<reference key="1">
    <citation type="journal article" date="2005" name="Nature">
        <title>The origin of the naked grains of maize.</title>
        <authorList>
            <person name="Wang H."/>
            <person name="Nussbaum-Wagler T."/>
            <person name="Li B."/>
            <person name="Zhao Q."/>
            <person name="Vigouroux Y."/>
            <person name="Faller M."/>
            <person name="Bomblies K."/>
            <person name="Lukens L."/>
            <person name="Doebley J.F."/>
        </authorList>
    </citation>
    <scope>NUCLEOTIDE SEQUENCE [GENOMIC DNA]</scope>
    <source>
        <strain>cv. B73</strain>
    </source>
</reference>
<reference key="2">
    <citation type="journal article" date="2009" name="Science">
        <title>The B73 maize genome: complexity, diversity, and dynamics.</title>
        <authorList>
            <person name="Schnable P.S."/>
            <person name="Ware D."/>
            <person name="Fulton R.S."/>
            <person name="Stein J.C."/>
            <person name="Wei F."/>
            <person name="Pasternak S."/>
            <person name="Liang C."/>
            <person name="Zhang J."/>
            <person name="Fulton L."/>
            <person name="Graves T.A."/>
            <person name="Minx P."/>
            <person name="Reily A.D."/>
            <person name="Courtney L."/>
            <person name="Kruchowski S.S."/>
            <person name="Tomlinson C."/>
            <person name="Strong C."/>
            <person name="Delehaunty K."/>
            <person name="Fronick C."/>
            <person name="Courtney B."/>
            <person name="Rock S.M."/>
            <person name="Belter E."/>
            <person name="Du F."/>
            <person name="Kim K."/>
            <person name="Abbott R.M."/>
            <person name="Cotton M."/>
            <person name="Levy A."/>
            <person name="Marchetto P."/>
            <person name="Ochoa K."/>
            <person name="Jackson S.M."/>
            <person name="Gillam B."/>
            <person name="Chen W."/>
            <person name="Yan L."/>
            <person name="Higginbotham J."/>
            <person name="Cardenas M."/>
            <person name="Waligorski J."/>
            <person name="Applebaum E."/>
            <person name="Phelps L."/>
            <person name="Falcone J."/>
            <person name="Kanchi K."/>
            <person name="Thane T."/>
            <person name="Scimone A."/>
            <person name="Thane N."/>
            <person name="Henke J."/>
            <person name="Wang T."/>
            <person name="Ruppert J."/>
            <person name="Shah N."/>
            <person name="Rotter K."/>
            <person name="Hodges J."/>
            <person name="Ingenthron E."/>
            <person name="Cordes M."/>
            <person name="Kohlberg S."/>
            <person name="Sgro J."/>
            <person name="Delgado B."/>
            <person name="Mead K."/>
            <person name="Chinwalla A."/>
            <person name="Leonard S."/>
            <person name="Crouse K."/>
            <person name="Collura K."/>
            <person name="Kudrna D."/>
            <person name="Currie J."/>
            <person name="He R."/>
            <person name="Angelova A."/>
            <person name="Rajasekar S."/>
            <person name="Mueller T."/>
            <person name="Lomeli R."/>
            <person name="Scara G."/>
            <person name="Ko A."/>
            <person name="Delaney K."/>
            <person name="Wissotski M."/>
            <person name="Lopez G."/>
            <person name="Campos D."/>
            <person name="Braidotti M."/>
            <person name="Ashley E."/>
            <person name="Golser W."/>
            <person name="Kim H."/>
            <person name="Lee S."/>
            <person name="Lin J."/>
            <person name="Dujmic Z."/>
            <person name="Kim W."/>
            <person name="Talag J."/>
            <person name="Zuccolo A."/>
            <person name="Fan C."/>
            <person name="Sebastian A."/>
            <person name="Kramer M."/>
            <person name="Spiegel L."/>
            <person name="Nascimento L."/>
            <person name="Zutavern T."/>
            <person name="Miller B."/>
            <person name="Ambroise C."/>
            <person name="Muller S."/>
            <person name="Spooner W."/>
            <person name="Narechania A."/>
            <person name="Ren L."/>
            <person name="Wei S."/>
            <person name="Kumari S."/>
            <person name="Faga B."/>
            <person name="Levy M.J."/>
            <person name="McMahan L."/>
            <person name="Van Buren P."/>
            <person name="Vaughn M.W."/>
            <person name="Ying K."/>
            <person name="Yeh C.-T."/>
            <person name="Emrich S.J."/>
            <person name="Jia Y."/>
            <person name="Kalyanaraman A."/>
            <person name="Hsia A.-P."/>
            <person name="Barbazuk W.B."/>
            <person name="Baucom R.S."/>
            <person name="Brutnell T.P."/>
            <person name="Carpita N.C."/>
            <person name="Chaparro C."/>
            <person name="Chia J.-M."/>
            <person name="Deragon J.-M."/>
            <person name="Estill J.C."/>
            <person name="Fu Y."/>
            <person name="Jeddeloh J.A."/>
            <person name="Han Y."/>
            <person name="Lee H."/>
            <person name="Li P."/>
            <person name="Lisch D.R."/>
            <person name="Liu S."/>
            <person name="Liu Z."/>
            <person name="Nagel D.H."/>
            <person name="McCann M.C."/>
            <person name="SanMiguel P."/>
            <person name="Myers A.M."/>
            <person name="Nettleton D."/>
            <person name="Nguyen J."/>
            <person name="Penning B.W."/>
            <person name="Ponnala L."/>
            <person name="Schneider K.L."/>
            <person name="Schwartz D.C."/>
            <person name="Sharma A."/>
            <person name="Soderlund C."/>
            <person name="Springer N.M."/>
            <person name="Sun Q."/>
            <person name="Wang H."/>
            <person name="Waterman M."/>
            <person name="Westerman R."/>
            <person name="Wolfgruber T.K."/>
            <person name="Yang L."/>
            <person name="Yu Y."/>
            <person name="Zhang L."/>
            <person name="Zhou S."/>
            <person name="Zhu Q."/>
            <person name="Bennetzen J.L."/>
            <person name="Dawe R.K."/>
            <person name="Jiang J."/>
            <person name="Jiang N."/>
            <person name="Presting G.G."/>
            <person name="Wessler S.R."/>
            <person name="Aluru S."/>
            <person name="Martienssen R.A."/>
            <person name="Clifton S.W."/>
            <person name="McCombie W.R."/>
            <person name="Wing R.A."/>
            <person name="Wilson R.K."/>
        </authorList>
    </citation>
    <scope>NUCLEOTIDE SEQUENCE [LARGE SCALE GENOMIC DNA]</scope>
    <source>
        <strain>cv. B73</strain>
    </source>
</reference>
<reference key="3">
    <citation type="submission" date="2013-02" db="EMBL/GenBank/DDBJ databases">
        <authorList>
            <consortium name="Maize Genome Sequencing Project"/>
        </authorList>
    </citation>
    <scope>NUCLEOTIDE SEQUENCE [LARGE SCALE GENOMIC DNA]</scope>
</reference>
<reference key="4">
    <citation type="journal article" date="2012" name="New Phytol.">
        <title>The role of teosinte glume architecture (tga1) in coordinated regulation and evolution of grass glumes and inflorescence axes.</title>
        <authorList>
            <person name="Preston J.C."/>
            <person name="Wang H."/>
            <person name="Kursel L."/>
            <person name="Doebley J."/>
            <person name="Kellogg E.A."/>
        </authorList>
    </citation>
    <scope>NUCLEOTIDE SEQUENCE [GENOMIC DNA] OF 314-432</scope>
</reference>
<comment type="function">
    <text evidence="1">SBP transcriptional regulator probably involved in the domestication of maize. Acts as a transcriptional repressor binding to a 5'-GTAC-3' motif. May repress the growth of lateral branches in length and numbers.</text>
</comment>
<comment type="subunit">
    <text evidence="1">Monomer and homodimer.</text>
</comment>
<comment type="tissue specificity">
    <text evidence="1">Strongly expressed in immature ears and weakly in husks. Found in the inflorescence meristem of the developing ear, in the spikelet pair primordia, the glume primordia, the cupule forming region and other floral organs. Not detected in other tissues.</text>
</comment>
<comment type="domain">
    <text evidence="1">The N-terminal domain is necessary for dimerization.</text>
</comment>
<comment type="miscellaneous">
    <text evidence="1">A single Lys to Asn substitution at position 6 is the probable cause of the transition from the hardened fruitcase surrounding the kernels in teosinte to the cob that bears naked grains in maize. This substitution is not affecting the DNA binding site specificity, but increases the stability of the homodimers.</text>
</comment>
<protein>
    <recommendedName>
        <fullName evidence="4">Teosinte glume architecture 1</fullName>
    </recommendedName>
</protein>
<name>TGA1B_MAIZE</name>
<gene>
    <name evidence="4" type="primary">TGA1</name>
    <name evidence="5" type="ORF">GRMZM2G101511</name>
    <name evidence="6" type="ORF">ZEAMMB73_922217</name>
</gene>